<name>PYRB_ACIB5</name>
<reference key="1">
    <citation type="journal article" date="2008" name="J. Bacteriol.">
        <title>Comparative genome sequence analysis of multidrug-resistant Acinetobacter baumannii.</title>
        <authorList>
            <person name="Adams M.D."/>
            <person name="Goglin K."/>
            <person name="Molyneaux N."/>
            <person name="Hujer K.M."/>
            <person name="Lavender H."/>
            <person name="Jamison J.J."/>
            <person name="MacDonald I.J."/>
            <person name="Martin K.M."/>
            <person name="Russo T."/>
            <person name="Campagnari A.A."/>
            <person name="Hujer A.M."/>
            <person name="Bonomo R.A."/>
            <person name="Gill S.R."/>
        </authorList>
    </citation>
    <scope>NUCLEOTIDE SEQUENCE [LARGE SCALE GENOMIC DNA]</scope>
    <source>
        <strain>AB0057</strain>
    </source>
</reference>
<gene>
    <name evidence="1" type="primary">pyrB</name>
    <name type="ordered locus">AB57_1327</name>
</gene>
<proteinExistence type="inferred from homology"/>
<evidence type="ECO:0000255" key="1">
    <source>
        <dbReference type="HAMAP-Rule" id="MF_00001"/>
    </source>
</evidence>
<dbReference type="EC" id="2.1.3.2" evidence="1"/>
<dbReference type="EMBL" id="CP001182">
    <property type="protein sequence ID" value="ACJ40349.1"/>
    <property type="molecule type" value="Genomic_DNA"/>
</dbReference>
<dbReference type="RefSeq" id="WP_000546643.1">
    <property type="nucleotide sequence ID" value="NC_011586.2"/>
</dbReference>
<dbReference type="SMR" id="B7IAG6"/>
<dbReference type="KEGG" id="abn:AB57_1327"/>
<dbReference type="HOGENOM" id="CLU_043846_2_0_6"/>
<dbReference type="UniPathway" id="UPA00070">
    <property type="reaction ID" value="UER00116"/>
</dbReference>
<dbReference type="Proteomes" id="UP000007094">
    <property type="component" value="Chromosome"/>
</dbReference>
<dbReference type="GO" id="GO:0005829">
    <property type="term" value="C:cytosol"/>
    <property type="evidence" value="ECO:0007669"/>
    <property type="project" value="TreeGrafter"/>
</dbReference>
<dbReference type="GO" id="GO:0016597">
    <property type="term" value="F:amino acid binding"/>
    <property type="evidence" value="ECO:0007669"/>
    <property type="project" value="InterPro"/>
</dbReference>
<dbReference type="GO" id="GO:0004070">
    <property type="term" value="F:aspartate carbamoyltransferase activity"/>
    <property type="evidence" value="ECO:0007669"/>
    <property type="project" value="UniProtKB-UniRule"/>
</dbReference>
<dbReference type="GO" id="GO:0006207">
    <property type="term" value="P:'de novo' pyrimidine nucleobase biosynthetic process"/>
    <property type="evidence" value="ECO:0007669"/>
    <property type="project" value="InterPro"/>
</dbReference>
<dbReference type="GO" id="GO:0044205">
    <property type="term" value="P:'de novo' UMP biosynthetic process"/>
    <property type="evidence" value="ECO:0007669"/>
    <property type="project" value="UniProtKB-UniRule"/>
</dbReference>
<dbReference type="GO" id="GO:0006520">
    <property type="term" value="P:amino acid metabolic process"/>
    <property type="evidence" value="ECO:0007669"/>
    <property type="project" value="InterPro"/>
</dbReference>
<dbReference type="FunFam" id="3.40.50.1370:FF:000007">
    <property type="entry name" value="Aspartate carbamoyltransferase"/>
    <property type="match status" value="1"/>
</dbReference>
<dbReference type="Gene3D" id="3.40.50.1370">
    <property type="entry name" value="Aspartate/ornithine carbamoyltransferase"/>
    <property type="match status" value="2"/>
</dbReference>
<dbReference type="HAMAP" id="MF_00001">
    <property type="entry name" value="Asp_carb_tr"/>
    <property type="match status" value="1"/>
</dbReference>
<dbReference type="InterPro" id="IPR006132">
    <property type="entry name" value="Asp/Orn_carbamoyltranf_P-bd"/>
</dbReference>
<dbReference type="InterPro" id="IPR006130">
    <property type="entry name" value="Asp/Orn_carbamoylTrfase"/>
</dbReference>
<dbReference type="InterPro" id="IPR036901">
    <property type="entry name" value="Asp/Orn_carbamoylTrfase_sf"/>
</dbReference>
<dbReference type="InterPro" id="IPR002082">
    <property type="entry name" value="Asp_carbamoyltransf"/>
</dbReference>
<dbReference type="InterPro" id="IPR006131">
    <property type="entry name" value="Asp_carbamoyltransf_Asp/Orn-bd"/>
</dbReference>
<dbReference type="NCBIfam" id="TIGR00670">
    <property type="entry name" value="asp_carb_tr"/>
    <property type="match status" value="1"/>
</dbReference>
<dbReference type="NCBIfam" id="NF002032">
    <property type="entry name" value="PRK00856.1"/>
    <property type="match status" value="1"/>
</dbReference>
<dbReference type="PANTHER" id="PTHR45753:SF6">
    <property type="entry name" value="ASPARTATE CARBAMOYLTRANSFERASE"/>
    <property type="match status" value="1"/>
</dbReference>
<dbReference type="PANTHER" id="PTHR45753">
    <property type="entry name" value="ORNITHINE CARBAMOYLTRANSFERASE, MITOCHONDRIAL"/>
    <property type="match status" value="1"/>
</dbReference>
<dbReference type="Pfam" id="PF00185">
    <property type="entry name" value="OTCace"/>
    <property type="match status" value="1"/>
</dbReference>
<dbReference type="Pfam" id="PF02729">
    <property type="entry name" value="OTCace_N"/>
    <property type="match status" value="1"/>
</dbReference>
<dbReference type="PRINTS" id="PR00100">
    <property type="entry name" value="AOTCASE"/>
</dbReference>
<dbReference type="PRINTS" id="PR00101">
    <property type="entry name" value="ATCASE"/>
</dbReference>
<dbReference type="SUPFAM" id="SSF53671">
    <property type="entry name" value="Aspartate/ornithine carbamoyltransferase"/>
    <property type="match status" value="1"/>
</dbReference>
<dbReference type="PROSITE" id="PS00097">
    <property type="entry name" value="CARBAMOYLTRANSFERASE"/>
    <property type="match status" value="1"/>
</dbReference>
<protein>
    <recommendedName>
        <fullName evidence="1">Aspartate carbamoyltransferase catalytic subunit</fullName>
        <ecNumber evidence="1">2.1.3.2</ecNumber>
    </recommendedName>
    <alternativeName>
        <fullName evidence="1">Aspartate transcarbamylase</fullName>
        <shortName evidence="1">ATCase</shortName>
    </alternativeName>
</protein>
<organism>
    <name type="scientific">Acinetobacter baumannii (strain AB0057)</name>
    <dbReference type="NCBI Taxonomy" id="480119"/>
    <lineage>
        <taxon>Bacteria</taxon>
        <taxon>Pseudomonadati</taxon>
        <taxon>Pseudomonadota</taxon>
        <taxon>Gammaproteobacteria</taxon>
        <taxon>Moraxellales</taxon>
        <taxon>Moraxellaceae</taxon>
        <taxon>Acinetobacter</taxon>
        <taxon>Acinetobacter calcoaceticus/baumannii complex</taxon>
    </lineage>
</organism>
<comment type="function">
    <text evidence="1">Catalyzes the condensation of carbamoyl phosphate and aspartate to form carbamoyl aspartate and inorganic phosphate, the committed step in the de novo pyrimidine nucleotide biosynthesis pathway.</text>
</comment>
<comment type="catalytic activity">
    <reaction evidence="1">
        <text>carbamoyl phosphate + L-aspartate = N-carbamoyl-L-aspartate + phosphate + H(+)</text>
        <dbReference type="Rhea" id="RHEA:20013"/>
        <dbReference type="ChEBI" id="CHEBI:15378"/>
        <dbReference type="ChEBI" id="CHEBI:29991"/>
        <dbReference type="ChEBI" id="CHEBI:32814"/>
        <dbReference type="ChEBI" id="CHEBI:43474"/>
        <dbReference type="ChEBI" id="CHEBI:58228"/>
        <dbReference type="EC" id="2.1.3.2"/>
    </reaction>
</comment>
<comment type="pathway">
    <text evidence="1">Pyrimidine metabolism; UMP biosynthesis via de novo pathway; (S)-dihydroorotate from bicarbonate: step 2/3.</text>
</comment>
<comment type="subunit">
    <text evidence="1">Heterododecamer (2C3:3R2) of six catalytic PyrB chains organized as two trimers (C3), and six regulatory PyrI chains organized as three dimers (R2).</text>
</comment>
<comment type="similarity">
    <text evidence="1">Belongs to the aspartate/ornithine carbamoyltransferase superfamily. ATCase family.</text>
</comment>
<keyword id="KW-0665">Pyrimidine biosynthesis</keyword>
<keyword id="KW-0808">Transferase</keyword>
<accession>B7IAG6</accession>
<sequence>MHIAALHQPSQVQLNQDGNLKHFLTIEGLSKENLTKILDTAQSFLDDNNNLINRPLLEGRTVMNLFFENSTRTRTTFEAAAKRLSANVLNIDIARSSTSKGETLRDTLWNLEAMAADIFVVRHSSSGAAHFIAKDVCPKVAIINAGDGRHAHPTQAMLDMLTIRRETKKSFEDLSVAIIGDIKHSRVARSDVAALQTLGCKDIRVIAPNTLLPVGFSEYGDHVRLFNNMDEGITGCDVIIALRIQNERIDSPALSSQSEFYRMYGLNKERLSLAKPDCIVMHPGPMNRGVEIDSSIADGEQSVILKQVTNGIAVRMAVLALSMQGQLQEQGLIEAIAL</sequence>
<feature type="chain" id="PRO_1000116118" description="Aspartate carbamoyltransferase catalytic subunit">
    <location>
        <begin position="1"/>
        <end position="338"/>
    </location>
</feature>
<feature type="binding site" evidence="1">
    <location>
        <position position="72"/>
    </location>
    <ligand>
        <name>carbamoyl phosphate</name>
        <dbReference type="ChEBI" id="CHEBI:58228"/>
    </ligand>
</feature>
<feature type="binding site" evidence="1">
    <location>
        <position position="73"/>
    </location>
    <ligand>
        <name>carbamoyl phosphate</name>
        <dbReference type="ChEBI" id="CHEBI:58228"/>
    </ligand>
</feature>
<feature type="binding site" evidence="1">
    <location>
        <position position="100"/>
    </location>
    <ligand>
        <name>L-aspartate</name>
        <dbReference type="ChEBI" id="CHEBI:29991"/>
    </ligand>
</feature>
<feature type="binding site" evidence="1">
    <location>
        <position position="122"/>
    </location>
    <ligand>
        <name>carbamoyl phosphate</name>
        <dbReference type="ChEBI" id="CHEBI:58228"/>
    </ligand>
</feature>
<feature type="binding site" evidence="1">
    <location>
        <position position="152"/>
    </location>
    <ligand>
        <name>carbamoyl phosphate</name>
        <dbReference type="ChEBI" id="CHEBI:58228"/>
    </ligand>
</feature>
<feature type="binding site" evidence="1">
    <location>
        <position position="155"/>
    </location>
    <ligand>
        <name>carbamoyl phosphate</name>
        <dbReference type="ChEBI" id="CHEBI:58228"/>
    </ligand>
</feature>
<feature type="binding site" evidence="1">
    <location>
        <position position="186"/>
    </location>
    <ligand>
        <name>L-aspartate</name>
        <dbReference type="ChEBI" id="CHEBI:29991"/>
    </ligand>
</feature>
<feature type="binding site" evidence="1">
    <location>
        <position position="243"/>
    </location>
    <ligand>
        <name>L-aspartate</name>
        <dbReference type="ChEBI" id="CHEBI:29991"/>
    </ligand>
</feature>
<feature type="binding site" evidence="1">
    <location>
        <position position="284"/>
    </location>
    <ligand>
        <name>carbamoyl phosphate</name>
        <dbReference type="ChEBI" id="CHEBI:58228"/>
    </ligand>
</feature>
<feature type="binding site" evidence="1">
    <location>
        <position position="285"/>
    </location>
    <ligand>
        <name>carbamoyl phosphate</name>
        <dbReference type="ChEBI" id="CHEBI:58228"/>
    </ligand>
</feature>